<gene>
    <name evidence="1" type="primary">pqqE</name>
    <name type="ordered locus">PFL_5677</name>
</gene>
<accession>Q4K4U8</accession>
<reference key="1">
    <citation type="journal article" date="2005" name="Nat. Biotechnol.">
        <title>Complete genome sequence of the plant commensal Pseudomonas fluorescens Pf-5.</title>
        <authorList>
            <person name="Paulsen I.T."/>
            <person name="Press C.M."/>
            <person name="Ravel J."/>
            <person name="Kobayashi D.Y."/>
            <person name="Myers G.S.A."/>
            <person name="Mavrodi D.V."/>
            <person name="DeBoy R.T."/>
            <person name="Seshadri R."/>
            <person name="Ren Q."/>
            <person name="Madupu R."/>
            <person name="Dodson R.J."/>
            <person name="Durkin A.S."/>
            <person name="Brinkac L.M."/>
            <person name="Daugherty S.C."/>
            <person name="Sullivan S.A."/>
            <person name="Rosovitz M.J."/>
            <person name="Gwinn M.L."/>
            <person name="Zhou L."/>
            <person name="Schneider D.J."/>
            <person name="Cartinhour S.W."/>
            <person name="Nelson W.C."/>
            <person name="Weidman J."/>
            <person name="Watkins K."/>
            <person name="Tran K."/>
            <person name="Khouri H."/>
            <person name="Pierson E.A."/>
            <person name="Pierson L.S. III"/>
            <person name="Thomashow L.S."/>
            <person name="Loper J.E."/>
        </authorList>
    </citation>
    <scope>NUCLEOTIDE SEQUENCE [LARGE SCALE GENOMIC DNA]</scope>
    <source>
        <strain>ATCC BAA-477 / NRRL B-23932 / Pf-5</strain>
    </source>
</reference>
<sequence>MLSTGSNSPEAAVLPGKPEVGLPLWLLAELTYRCPLQCPYCSNPLDFAEQGKELSTEQWIKVFREAREMGAAQLGFSGGEPLVRQDLAELIGEARKLGFYTNLITSGIGLTEQKISDFKKAGLDHIQISFQASDEQVNNLLAGSKKAFAQKLEMARAVKAHGYPMVLNFVTHRHNIDKIDRIIELCIALEADFVELATCQFYGWAQLNRVGLLPTKEQLVRAERITNEYRARLEAQGHLCKLIFVTPDYYEERPKACMNGWGSIFLTVTPDGTALPCHGARQMPVQFPNVRDHSMQHIWYDSFGFNRFRGYDWMPEPCRSCDEKEKDFGGCRCQAFMLTGDASNADPVCSKSPHHGMILQAREESETATHTIEQLAFRNERNSRLIAKG</sequence>
<comment type="function">
    <text evidence="1">Catalyzes the cross-linking of a glutamate residue and a tyrosine residue in the PqqA protein as part of the biosynthesis of pyrroloquinoline quinone (PQQ).</text>
</comment>
<comment type="catalytic activity">
    <reaction evidence="1">
        <text>[PQQ precursor protein] + S-adenosyl-L-methionine = E-Y cross-linked-[PQQ precursor protein] + 5'-deoxyadenosine + L-methionine + H(+)</text>
        <dbReference type="Rhea" id="RHEA:56836"/>
        <dbReference type="Rhea" id="RHEA-COMP:14800"/>
        <dbReference type="Rhea" id="RHEA-COMP:14801"/>
        <dbReference type="ChEBI" id="CHEBI:15378"/>
        <dbReference type="ChEBI" id="CHEBI:17319"/>
        <dbReference type="ChEBI" id="CHEBI:57844"/>
        <dbReference type="ChEBI" id="CHEBI:59789"/>
        <dbReference type="ChEBI" id="CHEBI:141026"/>
        <dbReference type="ChEBI" id="CHEBI:141027"/>
        <dbReference type="EC" id="1.21.98.4"/>
    </reaction>
</comment>
<comment type="cofactor">
    <cofactor evidence="1">
        <name>[4Fe-4S] cluster</name>
        <dbReference type="ChEBI" id="CHEBI:49883"/>
    </cofactor>
    <text evidence="1">Binds 1 [4Fe-4S] cluster. The cluster is coordinated with 3 cysteines and an exchangeable S-adenosyl-L-methionine.</text>
</comment>
<comment type="pathway">
    <text evidence="1">Cofactor biosynthesis; pyrroloquinoline quinone biosynthesis.</text>
</comment>
<comment type="subunit">
    <text evidence="1">Interacts with PqqD. The interaction is necessary for activity of PqqE.</text>
</comment>
<comment type="similarity">
    <text evidence="1">Belongs to the radical SAM superfamily. PqqE family.</text>
</comment>
<dbReference type="EC" id="1.21.98.4" evidence="1"/>
<dbReference type="EMBL" id="CP000076">
    <property type="protein sequence ID" value="AAY94867.1"/>
    <property type="molecule type" value="Genomic_DNA"/>
</dbReference>
<dbReference type="RefSeq" id="WP_011063852.1">
    <property type="nucleotide sequence ID" value="NC_004129.6"/>
</dbReference>
<dbReference type="SMR" id="Q4K4U8"/>
<dbReference type="STRING" id="220664.PFL_5677"/>
<dbReference type="KEGG" id="pfl:PFL_5677"/>
<dbReference type="PATRIC" id="fig|220664.5.peg.5788"/>
<dbReference type="eggNOG" id="COG0535">
    <property type="taxonomic scope" value="Bacteria"/>
</dbReference>
<dbReference type="HOGENOM" id="CLU_009273_4_7_6"/>
<dbReference type="UniPathway" id="UPA00539"/>
<dbReference type="Proteomes" id="UP000008540">
    <property type="component" value="Chromosome"/>
</dbReference>
<dbReference type="GO" id="GO:0051539">
    <property type="term" value="F:4 iron, 4 sulfur cluster binding"/>
    <property type="evidence" value="ECO:0007669"/>
    <property type="project" value="UniProtKB-KW"/>
</dbReference>
<dbReference type="GO" id="GO:0009975">
    <property type="term" value="F:cyclase activity"/>
    <property type="evidence" value="ECO:0007669"/>
    <property type="project" value="UniProtKB-UniRule"/>
</dbReference>
<dbReference type="GO" id="GO:0005506">
    <property type="term" value="F:iron ion binding"/>
    <property type="evidence" value="ECO:0007669"/>
    <property type="project" value="UniProtKB-UniRule"/>
</dbReference>
<dbReference type="GO" id="GO:0016491">
    <property type="term" value="F:oxidoreductase activity"/>
    <property type="evidence" value="ECO:0007669"/>
    <property type="project" value="UniProtKB-KW"/>
</dbReference>
<dbReference type="GO" id="GO:1904047">
    <property type="term" value="F:S-adenosyl-L-methionine binding"/>
    <property type="evidence" value="ECO:0007669"/>
    <property type="project" value="UniProtKB-UniRule"/>
</dbReference>
<dbReference type="GO" id="GO:0018189">
    <property type="term" value="P:pyrroloquinoline quinone biosynthetic process"/>
    <property type="evidence" value="ECO:0007669"/>
    <property type="project" value="UniProtKB-UniRule"/>
</dbReference>
<dbReference type="CDD" id="cd01335">
    <property type="entry name" value="Radical_SAM"/>
    <property type="match status" value="1"/>
</dbReference>
<dbReference type="CDD" id="cd21119">
    <property type="entry name" value="SPASM_PqqE"/>
    <property type="match status" value="1"/>
</dbReference>
<dbReference type="Gene3D" id="3.20.20.70">
    <property type="entry name" value="Aldolase class I"/>
    <property type="match status" value="1"/>
</dbReference>
<dbReference type="HAMAP" id="MF_00660">
    <property type="entry name" value="PqqE"/>
    <property type="match status" value="1"/>
</dbReference>
<dbReference type="InterPro" id="IPR023885">
    <property type="entry name" value="4Fe4S-binding_SPASM_dom"/>
</dbReference>
<dbReference type="InterPro" id="IPR013785">
    <property type="entry name" value="Aldolase_TIM"/>
</dbReference>
<dbReference type="InterPro" id="IPR006638">
    <property type="entry name" value="Elp3/MiaA/NifB-like_rSAM"/>
</dbReference>
<dbReference type="InterPro" id="IPR000385">
    <property type="entry name" value="MoaA_NifB_PqqE_Fe-S-bd_CS"/>
</dbReference>
<dbReference type="InterPro" id="IPR011843">
    <property type="entry name" value="PQQ_synth_PqqE_bac"/>
</dbReference>
<dbReference type="InterPro" id="IPR017200">
    <property type="entry name" value="PqqE-like"/>
</dbReference>
<dbReference type="InterPro" id="IPR050377">
    <property type="entry name" value="Radical_SAM_PqqE_MftC-like"/>
</dbReference>
<dbReference type="InterPro" id="IPR007197">
    <property type="entry name" value="rSAM"/>
</dbReference>
<dbReference type="NCBIfam" id="TIGR02109">
    <property type="entry name" value="PQQ_syn_pqqE"/>
    <property type="match status" value="1"/>
</dbReference>
<dbReference type="NCBIfam" id="TIGR04085">
    <property type="entry name" value="rSAM_more_4Fe4S"/>
    <property type="match status" value="1"/>
</dbReference>
<dbReference type="PANTHER" id="PTHR11228:SF7">
    <property type="entry name" value="PQQA PEPTIDE CYCLASE"/>
    <property type="match status" value="1"/>
</dbReference>
<dbReference type="PANTHER" id="PTHR11228">
    <property type="entry name" value="RADICAL SAM DOMAIN PROTEIN"/>
    <property type="match status" value="1"/>
</dbReference>
<dbReference type="Pfam" id="PF13353">
    <property type="entry name" value="Fer4_12"/>
    <property type="match status" value="1"/>
</dbReference>
<dbReference type="Pfam" id="PF04055">
    <property type="entry name" value="Radical_SAM"/>
    <property type="match status" value="1"/>
</dbReference>
<dbReference type="Pfam" id="PF13186">
    <property type="entry name" value="SPASM"/>
    <property type="match status" value="1"/>
</dbReference>
<dbReference type="PIRSF" id="PIRSF037420">
    <property type="entry name" value="PQQ_syn_pqqE"/>
    <property type="match status" value="1"/>
</dbReference>
<dbReference type="SFLD" id="SFLDF00280">
    <property type="entry name" value="coenzyme_PQQ_synthesis_protein"/>
    <property type="match status" value="1"/>
</dbReference>
<dbReference type="SFLD" id="SFLDS00029">
    <property type="entry name" value="Radical_SAM"/>
    <property type="match status" value="1"/>
</dbReference>
<dbReference type="SMART" id="SM00729">
    <property type="entry name" value="Elp3"/>
    <property type="match status" value="1"/>
</dbReference>
<dbReference type="SUPFAM" id="SSF102114">
    <property type="entry name" value="Radical SAM enzymes"/>
    <property type="match status" value="1"/>
</dbReference>
<dbReference type="PROSITE" id="PS01305">
    <property type="entry name" value="MOAA_NIFB_PQQE"/>
    <property type="match status" value="1"/>
</dbReference>
<dbReference type="PROSITE" id="PS51918">
    <property type="entry name" value="RADICAL_SAM"/>
    <property type="match status" value="1"/>
</dbReference>
<name>PQQE_PSEF5</name>
<proteinExistence type="inferred from homology"/>
<evidence type="ECO:0000255" key="1">
    <source>
        <dbReference type="HAMAP-Rule" id="MF_00660"/>
    </source>
</evidence>
<evidence type="ECO:0000255" key="2">
    <source>
        <dbReference type="PROSITE-ProRule" id="PRU01266"/>
    </source>
</evidence>
<feature type="chain" id="PRO_0000219944" description="PqqA peptide cyclase">
    <location>
        <begin position="1"/>
        <end position="389"/>
    </location>
</feature>
<feature type="domain" description="Radical SAM core" evidence="2">
    <location>
        <begin position="20"/>
        <end position="235"/>
    </location>
</feature>
<feature type="binding site" evidence="1">
    <location>
        <position position="34"/>
    </location>
    <ligand>
        <name>[4Fe-4S] cluster</name>
        <dbReference type="ChEBI" id="CHEBI:49883"/>
        <note>4Fe-4S-S-AdoMet</note>
    </ligand>
</feature>
<feature type="binding site" evidence="1">
    <location>
        <position position="38"/>
    </location>
    <ligand>
        <name>[4Fe-4S] cluster</name>
        <dbReference type="ChEBI" id="CHEBI:49883"/>
        <note>4Fe-4S-S-AdoMet</note>
    </ligand>
</feature>
<feature type="binding site" evidence="1">
    <location>
        <position position="41"/>
    </location>
    <ligand>
        <name>[4Fe-4S] cluster</name>
        <dbReference type="ChEBI" id="CHEBI:49883"/>
        <note>4Fe-4S-S-AdoMet</note>
    </ligand>
</feature>
<keyword id="KW-0004">4Fe-4S</keyword>
<keyword id="KW-0408">Iron</keyword>
<keyword id="KW-0411">Iron-sulfur</keyword>
<keyword id="KW-0479">Metal-binding</keyword>
<keyword id="KW-0560">Oxidoreductase</keyword>
<keyword id="KW-0884">PQQ biosynthesis</keyword>
<keyword id="KW-0949">S-adenosyl-L-methionine</keyword>
<organism>
    <name type="scientific">Pseudomonas fluorescens (strain ATCC BAA-477 / NRRL B-23932 / Pf-5)</name>
    <dbReference type="NCBI Taxonomy" id="220664"/>
    <lineage>
        <taxon>Bacteria</taxon>
        <taxon>Pseudomonadati</taxon>
        <taxon>Pseudomonadota</taxon>
        <taxon>Gammaproteobacteria</taxon>
        <taxon>Pseudomonadales</taxon>
        <taxon>Pseudomonadaceae</taxon>
        <taxon>Pseudomonas</taxon>
    </lineage>
</organism>
<protein>
    <recommendedName>
        <fullName evidence="1">PqqA peptide cyclase</fullName>
        <ecNumber evidence="1">1.21.98.4</ecNumber>
    </recommendedName>
    <alternativeName>
        <fullName evidence="1">Coenzyme PQQ synthesis protein E</fullName>
    </alternativeName>
    <alternativeName>
        <fullName evidence="1">Pyrroloquinoline quinone biosynthesis protein E</fullName>
    </alternativeName>
</protein>